<sequence length="587" mass="63570">MRPRGLPPLLVVLLGCWASVSAQTDATPAVTTEGLNSTEAALATFGTFPSTRPPGTPRAPGPSSGPRPTPVTDVAVLCVCDLSPAQCDINCCCDPDCSSVDFSVFSACSVPVVTGDSQFCSQKAVIYSLNFTANPPQRVFELVDQINPSIFCIHITNYKPALSFINPEVPDENNFDTLMKTSDGFTLNAESYVSFTTKLDIPTAAKYEYGVPLQTSDSFLRFPSSLTSSLCTDNNPAAFLVNQAVKCTRKINLEQCEEIEALSMAFYSSPEILRVPDSRKKVPITVQSIVIQSLNKTLTRREDTDVLQPTLVNAGHFSLCVNVVLEVKYSLTYTDAGEVTKADLSFVLGTVSSVVVPLQQKFEIHFLQENTQPVPLSGNPGYVVGLPLAAGFQPHKGSGIIQTTNRYGQLTILHSTTEQDCLALEGVRTPVLFGYTMQSGCKLRLTGALPCQLVAQKVKSLLWGQGFPDYVAPFGNSQAQDMLDWVPIHFITQSFNRKDSCQLPGALVIEVKWTKYGSLLNPQAKIVNVTANLISSSFPEANSGNERTILISTAVTFVDVSAPAEAGFRAPPAINARLPFNFFFPFV</sequence>
<accession>Q2MV58</accession>
<accession>A8MX11</accession>
<accession>Q49A60</accession>
<accession>Q6P5X1</accession>
<accession>Q6UXW2</accession>
<accession>Q8NAE9</accession>
<accession>Q96N72</accession>
<accession>Q9H798</accession>
<protein>
    <recommendedName>
        <fullName>Tectonic-1</fullName>
    </recommendedName>
</protein>
<keyword id="KW-0025">Alternative splicing</keyword>
<keyword id="KW-0966">Cell projection</keyword>
<keyword id="KW-1186">Ciliopathy</keyword>
<keyword id="KW-0970">Cilium biogenesis/degradation</keyword>
<keyword id="KW-0963">Cytoplasm</keyword>
<keyword id="KW-0206">Cytoskeleton</keyword>
<keyword id="KW-0217">Developmental protein</keyword>
<keyword id="KW-0325">Glycoprotein</keyword>
<keyword id="KW-0979">Joubert syndrome</keyword>
<keyword id="KW-1267">Proteomics identification</keyword>
<keyword id="KW-1185">Reference proteome</keyword>
<keyword id="KW-0964">Secreted</keyword>
<keyword id="KW-0732">Signal</keyword>
<reference key="1">
    <citation type="journal article" date="2006" name="Genes Dev.">
        <title>Tectonic, a novel regulator of the Hedgehog pathway required for both activation and inhibition.</title>
        <authorList>
            <person name="Reiter J.F."/>
            <person name="Skarnes W.C."/>
        </authorList>
    </citation>
    <scope>NUCLEOTIDE SEQUENCE [MRNA] (ISOFORM 1)</scope>
</reference>
<reference key="2">
    <citation type="journal article" date="2003" name="Genome Res.">
        <title>The secreted protein discovery initiative (SPDI), a large-scale effort to identify novel human secreted and transmembrane proteins: a bioinformatics assessment.</title>
        <authorList>
            <person name="Clark H.F."/>
            <person name="Gurney A.L."/>
            <person name="Abaya E."/>
            <person name="Baker K."/>
            <person name="Baldwin D.T."/>
            <person name="Brush J."/>
            <person name="Chen J."/>
            <person name="Chow B."/>
            <person name="Chui C."/>
            <person name="Crowley C."/>
            <person name="Currell B."/>
            <person name="Deuel B."/>
            <person name="Dowd P."/>
            <person name="Eaton D."/>
            <person name="Foster J.S."/>
            <person name="Grimaldi C."/>
            <person name="Gu Q."/>
            <person name="Hass P.E."/>
            <person name="Heldens S."/>
            <person name="Huang A."/>
            <person name="Kim H.S."/>
            <person name="Klimowski L."/>
            <person name="Jin Y."/>
            <person name="Johnson S."/>
            <person name="Lee J."/>
            <person name="Lewis L."/>
            <person name="Liao D."/>
            <person name="Mark M.R."/>
            <person name="Robbie E."/>
            <person name="Sanchez C."/>
            <person name="Schoenfeld J."/>
            <person name="Seshagiri S."/>
            <person name="Simmons L."/>
            <person name="Singh J."/>
            <person name="Smith V."/>
            <person name="Stinson J."/>
            <person name="Vagts A."/>
            <person name="Vandlen R.L."/>
            <person name="Watanabe C."/>
            <person name="Wieand D."/>
            <person name="Woods K."/>
            <person name="Xie M.-H."/>
            <person name="Yansura D.G."/>
            <person name="Yi S."/>
            <person name="Yu G."/>
            <person name="Yuan J."/>
            <person name="Zhang M."/>
            <person name="Zhang Z."/>
            <person name="Goddard A.D."/>
            <person name="Wood W.I."/>
            <person name="Godowski P.J."/>
            <person name="Gray A.M."/>
        </authorList>
    </citation>
    <scope>NUCLEOTIDE SEQUENCE [LARGE SCALE MRNA] (ISOFORM 2)</scope>
</reference>
<reference key="3">
    <citation type="journal article" date="2004" name="Nat. Genet.">
        <title>Complete sequencing and characterization of 21,243 full-length human cDNAs.</title>
        <authorList>
            <person name="Ota T."/>
            <person name="Suzuki Y."/>
            <person name="Nishikawa T."/>
            <person name="Otsuki T."/>
            <person name="Sugiyama T."/>
            <person name="Irie R."/>
            <person name="Wakamatsu A."/>
            <person name="Hayashi K."/>
            <person name="Sato H."/>
            <person name="Nagai K."/>
            <person name="Kimura K."/>
            <person name="Makita H."/>
            <person name="Sekine M."/>
            <person name="Obayashi M."/>
            <person name="Nishi T."/>
            <person name="Shibahara T."/>
            <person name="Tanaka T."/>
            <person name="Ishii S."/>
            <person name="Yamamoto J."/>
            <person name="Saito K."/>
            <person name="Kawai Y."/>
            <person name="Isono Y."/>
            <person name="Nakamura Y."/>
            <person name="Nagahari K."/>
            <person name="Murakami K."/>
            <person name="Yasuda T."/>
            <person name="Iwayanagi T."/>
            <person name="Wagatsuma M."/>
            <person name="Shiratori A."/>
            <person name="Sudo H."/>
            <person name="Hosoiri T."/>
            <person name="Kaku Y."/>
            <person name="Kodaira H."/>
            <person name="Kondo H."/>
            <person name="Sugawara M."/>
            <person name="Takahashi M."/>
            <person name="Kanda K."/>
            <person name="Yokoi T."/>
            <person name="Furuya T."/>
            <person name="Kikkawa E."/>
            <person name="Omura Y."/>
            <person name="Abe K."/>
            <person name="Kamihara K."/>
            <person name="Katsuta N."/>
            <person name="Sato K."/>
            <person name="Tanikawa M."/>
            <person name="Yamazaki M."/>
            <person name="Ninomiya K."/>
            <person name="Ishibashi T."/>
            <person name="Yamashita H."/>
            <person name="Murakawa K."/>
            <person name="Fujimori K."/>
            <person name="Tanai H."/>
            <person name="Kimata M."/>
            <person name="Watanabe M."/>
            <person name="Hiraoka S."/>
            <person name="Chiba Y."/>
            <person name="Ishida S."/>
            <person name="Ono Y."/>
            <person name="Takiguchi S."/>
            <person name="Watanabe S."/>
            <person name="Yosida M."/>
            <person name="Hotuta T."/>
            <person name="Kusano J."/>
            <person name="Kanehori K."/>
            <person name="Takahashi-Fujii A."/>
            <person name="Hara H."/>
            <person name="Tanase T.-O."/>
            <person name="Nomura Y."/>
            <person name="Togiya S."/>
            <person name="Komai F."/>
            <person name="Hara R."/>
            <person name="Takeuchi K."/>
            <person name="Arita M."/>
            <person name="Imose N."/>
            <person name="Musashino K."/>
            <person name="Yuuki H."/>
            <person name="Oshima A."/>
            <person name="Sasaki N."/>
            <person name="Aotsuka S."/>
            <person name="Yoshikawa Y."/>
            <person name="Matsunawa H."/>
            <person name="Ichihara T."/>
            <person name="Shiohata N."/>
            <person name="Sano S."/>
            <person name="Moriya S."/>
            <person name="Momiyama H."/>
            <person name="Satoh N."/>
            <person name="Takami S."/>
            <person name="Terashima Y."/>
            <person name="Suzuki O."/>
            <person name="Nakagawa S."/>
            <person name="Senoh A."/>
            <person name="Mizoguchi H."/>
            <person name="Goto Y."/>
            <person name="Shimizu F."/>
            <person name="Wakebe H."/>
            <person name="Hishigaki H."/>
            <person name="Watanabe T."/>
            <person name="Sugiyama A."/>
            <person name="Takemoto M."/>
            <person name="Kawakami B."/>
            <person name="Yamazaki M."/>
            <person name="Watanabe K."/>
            <person name="Kumagai A."/>
            <person name="Itakura S."/>
            <person name="Fukuzumi Y."/>
            <person name="Fujimori Y."/>
            <person name="Komiyama M."/>
            <person name="Tashiro H."/>
            <person name="Tanigami A."/>
            <person name="Fujiwara T."/>
            <person name="Ono T."/>
            <person name="Yamada K."/>
            <person name="Fujii Y."/>
            <person name="Ozaki K."/>
            <person name="Hirao M."/>
            <person name="Ohmori Y."/>
            <person name="Kawabata A."/>
            <person name="Hikiji T."/>
            <person name="Kobatake N."/>
            <person name="Inagaki H."/>
            <person name="Ikema Y."/>
            <person name="Okamoto S."/>
            <person name="Okitani R."/>
            <person name="Kawakami T."/>
            <person name="Noguchi S."/>
            <person name="Itoh T."/>
            <person name="Shigeta K."/>
            <person name="Senba T."/>
            <person name="Matsumura K."/>
            <person name="Nakajima Y."/>
            <person name="Mizuno T."/>
            <person name="Morinaga M."/>
            <person name="Sasaki M."/>
            <person name="Togashi T."/>
            <person name="Oyama M."/>
            <person name="Hata H."/>
            <person name="Watanabe M."/>
            <person name="Komatsu T."/>
            <person name="Mizushima-Sugano J."/>
            <person name="Satoh T."/>
            <person name="Shirai Y."/>
            <person name="Takahashi Y."/>
            <person name="Nakagawa K."/>
            <person name="Okumura K."/>
            <person name="Nagase T."/>
            <person name="Nomura N."/>
            <person name="Kikuchi H."/>
            <person name="Masuho Y."/>
            <person name="Yamashita R."/>
            <person name="Nakai K."/>
            <person name="Yada T."/>
            <person name="Nakamura Y."/>
            <person name="Ohara O."/>
            <person name="Isogai T."/>
            <person name="Sugano S."/>
        </authorList>
    </citation>
    <scope>NUCLEOTIDE SEQUENCE [LARGE SCALE MRNA] (ISOFORMS 3; 4 AND 5)</scope>
    <source>
        <tissue>Artery smooth muscle</tissue>
        <tissue>Mammary gland</tissue>
        <tissue>Small intestine</tissue>
    </source>
</reference>
<reference key="4">
    <citation type="journal article" date="2006" name="Nature">
        <title>The finished DNA sequence of human chromosome 12.</title>
        <authorList>
            <person name="Scherer S.E."/>
            <person name="Muzny D.M."/>
            <person name="Buhay C.J."/>
            <person name="Chen R."/>
            <person name="Cree A."/>
            <person name="Ding Y."/>
            <person name="Dugan-Rocha S."/>
            <person name="Gill R."/>
            <person name="Gunaratne P."/>
            <person name="Harris R.A."/>
            <person name="Hawes A.C."/>
            <person name="Hernandez J."/>
            <person name="Hodgson A.V."/>
            <person name="Hume J."/>
            <person name="Jackson A."/>
            <person name="Khan Z.M."/>
            <person name="Kovar-Smith C."/>
            <person name="Lewis L.R."/>
            <person name="Lozado R.J."/>
            <person name="Metzker M.L."/>
            <person name="Milosavljevic A."/>
            <person name="Miner G.R."/>
            <person name="Montgomery K.T."/>
            <person name="Morgan M.B."/>
            <person name="Nazareth L.V."/>
            <person name="Scott G."/>
            <person name="Sodergren E."/>
            <person name="Song X.-Z."/>
            <person name="Steffen D."/>
            <person name="Lovering R.C."/>
            <person name="Wheeler D.A."/>
            <person name="Worley K.C."/>
            <person name="Yuan Y."/>
            <person name="Zhang Z."/>
            <person name="Adams C.Q."/>
            <person name="Ansari-Lari M.A."/>
            <person name="Ayele M."/>
            <person name="Brown M.J."/>
            <person name="Chen G."/>
            <person name="Chen Z."/>
            <person name="Clerc-Blankenburg K.P."/>
            <person name="Davis C."/>
            <person name="Delgado O."/>
            <person name="Dinh H.H."/>
            <person name="Draper H."/>
            <person name="Gonzalez-Garay M.L."/>
            <person name="Havlak P."/>
            <person name="Jackson L.R."/>
            <person name="Jacob L.S."/>
            <person name="Kelly S.H."/>
            <person name="Li L."/>
            <person name="Li Z."/>
            <person name="Liu J."/>
            <person name="Liu W."/>
            <person name="Lu J."/>
            <person name="Maheshwari M."/>
            <person name="Nguyen B.-V."/>
            <person name="Okwuonu G.O."/>
            <person name="Pasternak S."/>
            <person name="Perez L.M."/>
            <person name="Plopper F.J.H."/>
            <person name="Santibanez J."/>
            <person name="Shen H."/>
            <person name="Tabor P.E."/>
            <person name="Verduzco D."/>
            <person name="Waldron L."/>
            <person name="Wang Q."/>
            <person name="Williams G.A."/>
            <person name="Zhang J."/>
            <person name="Zhou J."/>
            <person name="Allen C.C."/>
            <person name="Amin A.G."/>
            <person name="Anyalebechi V."/>
            <person name="Bailey M."/>
            <person name="Barbaria J.A."/>
            <person name="Bimage K.E."/>
            <person name="Bryant N.P."/>
            <person name="Burch P.E."/>
            <person name="Burkett C.E."/>
            <person name="Burrell K.L."/>
            <person name="Calderon E."/>
            <person name="Cardenas V."/>
            <person name="Carter K."/>
            <person name="Casias K."/>
            <person name="Cavazos I."/>
            <person name="Cavazos S.R."/>
            <person name="Ceasar H."/>
            <person name="Chacko J."/>
            <person name="Chan S.N."/>
            <person name="Chavez D."/>
            <person name="Christopoulos C."/>
            <person name="Chu J."/>
            <person name="Cockrell R."/>
            <person name="Cox C.D."/>
            <person name="Dang M."/>
            <person name="Dathorne S.R."/>
            <person name="David R."/>
            <person name="Davis C.M."/>
            <person name="Davy-Carroll L."/>
            <person name="Deshazo D.R."/>
            <person name="Donlin J.E."/>
            <person name="D'Souza L."/>
            <person name="Eaves K.A."/>
            <person name="Egan A."/>
            <person name="Emery-Cohen A.J."/>
            <person name="Escotto M."/>
            <person name="Flagg N."/>
            <person name="Forbes L.D."/>
            <person name="Gabisi A.M."/>
            <person name="Garza M."/>
            <person name="Hamilton C."/>
            <person name="Henderson N."/>
            <person name="Hernandez O."/>
            <person name="Hines S."/>
            <person name="Hogues M.E."/>
            <person name="Huang M."/>
            <person name="Idlebird D.G."/>
            <person name="Johnson R."/>
            <person name="Jolivet A."/>
            <person name="Jones S."/>
            <person name="Kagan R."/>
            <person name="King L.M."/>
            <person name="Leal B."/>
            <person name="Lebow H."/>
            <person name="Lee S."/>
            <person name="LeVan J.M."/>
            <person name="Lewis L.C."/>
            <person name="London P."/>
            <person name="Lorensuhewa L.M."/>
            <person name="Loulseged H."/>
            <person name="Lovett D.A."/>
            <person name="Lucier A."/>
            <person name="Lucier R.L."/>
            <person name="Ma J."/>
            <person name="Madu R.C."/>
            <person name="Mapua P."/>
            <person name="Martindale A.D."/>
            <person name="Martinez E."/>
            <person name="Massey E."/>
            <person name="Mawhiney S."/>
            <person name="Meador M.G."/>
            <person name="Mendez S."/>
            <person name="Mercado C."/>
            <person name="Mercado I.C."/>
            <person name="Merritt C.E."/>
            <person name="Miner Z.L."/>
            <person name="Minja E."/>
            <person name="Mitchell T."/>
            <person name="Mohabbat F."/>
            <person name="Mohabbat K."/>
            <person name="Montgomery B."/>
            <person name="Moore N."/>
            <person name="Morris S."/>
            <person name="Munidasa M."/>
            <person name="Ngo R.N."/>
            <person name="Nguyen N.B."/>
            <person name="Nickerson E."/>
            <person name="Nwaokelemeh O.O."/>
            <person name="Nwokenkwo S."/>
            <person name="Obregon M."/>
            <person name="Oguh M."/>
            <person name="Oragunye N."/>
            <person name="Oviedo R.J."/>
            <person name="Parish B.J."/>
            <person name="Parker D.N."/>
            <person name="Parrish J."/>
            <person name="Parks K.L."/>
            <person name="Paul H.A."/>
            <person name="Payton B.A."/>
            <person name="Perez A."/>
            <person name="Perrin W."/>
            <person name="Pickens A."/>
            <person name="Primus E.L."/>
            <person name="Pu L.-L."/>
            <person name="Puazo M."/>
            <person name="Quiles M.M."/>
            <person name="Quiroz J.B."/>
            <person name="Rabata D."/>
            <person name="Reeves K."/>
            <person name="Ruiz S.J."/>
            <person name="Shao H."/>
            <person name="Sisson I."/>
            <person name="Sonaike T."/>
            <person name="Sorelle R.P."/>
            <person name="Sutton A.E."/>
            <person name="Svatek A.F."/>
            <person name="Svetz L.A."/>
            <person name="Tamerisa K.S."/>
            <person name="Taylor T.R."/>
            <person name="Teague B."/>
            <person name="Thomas N."/>
            <person name="Thorn R.D."/>
            <person name="Trejos Z.Y."/>
            <person name="Trevino B.K."/>
            <person name="Ukegbu O.N."/>
            <person name="Urban J.B."/>
            <person name="Vasquez L.I."/>
            <person name="Vera V.A."/>
            <person name="Villasana D.M."/>
            <person name="Wang L."/>
            <person name="Ward-Moore S."/>
            <person name="Warren J.T."/>
            <person name="Wei X."/>
            <person name="White F."/>
            <person name="Williamson A.L."/>
            <person name="Wleczyk R."/>
            <person name="Wooden H.S."/>
            <person name="Wooden S.H."/>
            <person name="Yen J."/>
            <person name="Yoon L."/>
            <person name="Yoon V."/>
            <person name="Zorrilla S.E."/>
            <person name="Nelson D."/>
            <person name="Kucherlapati R."/>
            <person name="Weinstock G."/>
            <person name="Gibbs R.A."/>
        </authorList>
    </citation>
    <scope>NUCLEOTIDE SEQUENCE [LARGE SCALE GENOMIC DNA]</scope>
</reference>
<reference key="5">
    <citation type="journal article" date="2004" name="Genome Res.">
        <title>The status, quality, and expansion of the NIH full-length cDNA project: the Mammalian Gene Collection (MGC).</title>
        <authorList>
            <consortium name="The MGC Project Team"/>
        </authorList>
    </citation>
    <scope>NUCLEOTIDE SEQUENCE [LARGE SCALE MRNA] (ISOFORMS 1; 3 AND 6)</scope>
    <source>
        <tissue>Pancreas</tissue>
        <tissue>Testis</tissue>
    </source>
</reference>
<reference key="6">
    <citation type="journal article" date="2011" name="Nat. Genet.">
        <title>A transition zone complex regulates mammalian ciliogenesis and ciliary membrane composition.</title>
        <authorList>
            <person name="Garcia-Gonzalo F.R."/>
            <person name="Corbit K.C."/>
            <person name="Sirerol-Piquer M.S."/>
            <person name="Ramaswami G."/>
            <person name="Otto E.A."/>
            <person name="Noriega T.R."/>
            <person name="Seol A.D."/>
            <person name="Robinson J.F."/>
            <person name="Bennett C.L."/>
            <person name="Josifova D.J."/>
            <person name="Garcia-Verdugo J.M."/>
            <person name="Katsanis N."/>
            <person name="Hildebrandt F."/>
            <person name="Reiter J.F."/>
        </authorList>
    </citation>
    <scope>INVOLVEMENT IN JBTS13</scope>
    <scope>SUBCELLULAR LOCATION</scope>
</reference>
<proteinExistence type="evidence at protein level"/>
<comment type="function">
    <text evidence="1">Component of the tectonic-like complex, a complex localized at the transition zone of primary cilia and acting as a barrier that prevents diffusion of transmembrane proteins between the cilia and plasma membranes. Regulator of Hedgehog (Hh), required for both activation and inhibition of the Hh pathway in the patterning of the neural tube. During neural tube development, it is required for formation of the most ventral cell types and for full Hh pathway activation. Functions in Hh signal transduction to fully activate the pathway in the presence of high Hh levels and to repress the pathway in the absence of Hh signals. Modulates Hh signal transduction downstream of SMO and RAB23 (By similarity).</text>
</comment>
<comment type="subunit">
    <text evidence="1">Part of the tectonic-like complex (also named B9 complex).</text>
</comment>
<comment type="subcellular location">
    <subcellularLocation>
        <location evidence="1">Cytoplasm</location>
        <location evidence="1">Cytoskeleton</location>
        <location evidence="1">Cilium basal body</location>
    </subcellularLocation>
    <subcellularLocation>
        <location evidence="8">Secreted</location>
    </subcellularLocation>
    <text evidence="1">Despite the presence of a signal sequence, the full-length protein might not be secreted. Localizes at the transition zone, a region between the basal body and the ciliary axoneme.</text>
</comment>
<comment type="alternative products">
    <event type="alternative splicing"/>
    <isoform>
        <id>Q2MV58-1</id>
        <name>1</name>
        <sequence type="displayed"/>
    </isoform>
    <isoform>
        <id>Q2MV58-2</id>
        <name>2</name>
        <sequence type="described" ref="VSP_017763"/>
    </isoform>
    <isoform>
        <id>Q2MV58-3</id>
        <name>3</name>
        <sequence type="described" ref="VSP_017759"/>
    </isoform>
    <isoform>
        <id>Q2MV58-4</id>
        <name>4</name>
        <sequence type="described" ref="VSP_017757"/>
    </isoform>
    <isoform>
        <id>Q2MV58-5</id>
        <name>5</name>
        <sequence type="described" ref="VSP_017758 VSP_017761 VSP_017763"/>
    </isoform>
    <isoform>
        <id>Q2MV58-6</id>
        <name>6</name>
        <sequence type="described" ref="VSP_017756 VSP_017760 VSP_017762"/>
    </isoform>
</comment>
<comment type="disease" evidence="4">
    <disease id="DI-03232">
        <name>Joubert syndrome 13</name>
        <acronym>JBTS13</acronym>
        <description>A disorder presenting with cerebellar ataxia, oculomotor apraxia, hypotonia, neonatal breathing abnormalities and psychomotor delay. Neuroradiologically, it is characterized by cerebellar vermian hypoplasia/aplasia, thickened and reoriented superior cerebellar peduncles, and an abnormally large interpeduncular fossa, giving the appearance of a molar tooth on transaxial slices (molar tooth sign). Additional variable features include retinal dystrophy and renal disease.</description>
        <dbReference type="MIM" id="614173"/>
    </disease>
    <text>The disease is caused by variants affecting the gene represented in this entry.</text>
</comment>
<comment type="miscellaneous">
    <molecule>Isoform 6</molecule>
    <text evidence="8">May be produced at very low levels due to a premature stop codon in the mRNA, leading to nonsense-mediated mRNA decay.</text>
</comment>
<comment type="similarity">
    <text evidence="8">Belongs to the tectonic family.</text>
</comment>
<gene>
    <name type="primary">TCTN1</name>
    <name type="synonym">TECT1</name>
    <name type="ORF">UNQ9369/PRO34160</name>
</gene>
<name>TECT1_HUMAN</name>
<organism>
    <name type="scientific">Homo sapiens</name>
    <name type="common">Human</name>
    <dbReference type="NCBI Taxonomy" id="9606"/>
    <lineage>
        <taxon>Eukaryota</taxon>
        <taxon>Metazoa</taxon>
        <taxon>Chordata</taxon>
        <taxon>Craniata</taxon>
        <taxon>Vertebrata</taxon>
        <taxon>Euteleostomi</taxon>
        <taxon>Mammalia</taxon>
        <taxon>Eutheria</taxon>
        <taxon>Euarchontoglires</taxon>
        <taxon>Primates</taxon>
        <taxon>Haplorrhini</taxon>
        <taxon>Catarrhini</taxon>
        <taxon>Hominidae</taxon>
        <taxon>Homo</taxon>
    </lineage>
</organism>
<feature type="signal peptide" evidence="2">
    <location>
        <begin position="1"/>
        <end position="22"/>
    </location>
</feature>
<feature type="chain" id="PRO_0000229796" description="Tectonic-1">
    <location>
        <begin position="23"/>
        <end position="587"/>
    </location>
</feature>
<feature type="region of interest" description="Disordered" evidence="3">
    <location>
        <begin position="46"/>
        <end position="68"/>
    </location>
</feature>
<feature type="compositionally biased region" description="Pro residues" evidence="3">
    <location>
        <begin position="51"/>
        <end position="68"/>
    </location>
</feature>
<feature type="glycosylation site" description="N-linked (GlcNAc...) asparagine" evidence="2">
    <location>
        <position position="36"/>
    </location>
</feature>
<feature type="glycosylation site" description="N-linked (GlcNAc...) asparagine" evidence="2">
    <location>
        <position position="295"/>
    </location>
</feature>
<feature type="glycosylation site" description="N-linked (GlcNAc...) asparagine" evidence="2">
    <location>
        <position position="528"/>
    </location>
</feature>
<feature type="splice variant" id="VSP_017756" description="In isoform 6." evidence="7">
    <location>
        <begin position="1"/>
        <end position="178"/>
    </location>
</feature>
<feature type="splice variant" id="VSP_017757" description="In isoform 4." evidence="6">
    <original>MRPRGLPPLLVVLLGCWASVSAQTDATPAVTTEGLNSTEAALATFGTFPSTRPPGTPRAPGPSSGPRPTPVTD</original>
    <variation>MCQLLESTVIQPQGDSP</variation>
    <location>
        <begin position="1"/>
        <end position="73"/>
    </location>
</feature>
<feature type="splice variant" id="VSP_017758" description="In isoform 5." evidence="6">
    <original>MRPRGLPPLLVVLLGCWASVSAQTDATPAVTTEGLNSTEAALATFGTFPSTRPPGTPRAPGPSSGPRPTPVTD</original>
    <variation>MITAHCGLDLLGS</variation>
    <location>
        <begin position="1"/>
        <end position="73"/>
    </location>
</feature>
<feature type="splice variant" id="VSP_017759" description="In isoform 3." evidence="6 7">
    <original>AFLVNQAVKCTRKINLEQCEEIEALSMAFYSSPEILR</original>
    <variation>GQAYWFTPVIPALWEAEARGSLE</variation>
    <location>
        <begin position="238"/>
        <end position="274"/>
    </location>
</feature>
<feature type="splice variant" id="VSP_017760" description="In isoform 6." evidence="7">
    <original>ENTQPVPLSGNPGYVVGLPLAAGFQPHKGSGIIQTTNRYGQLTILHSTTEQDCLALEGVRTPVLFGYTMQ</original>
    <variation>TDWSSPVSARSTEGEEPAVGPGLPRLRGPFWKFPGPGHAGLGAHPLHHPVIQQEGFLPAPRGFGYRSEVD</variation>
    <location>
        <begin position="369"/>
        <end position="438"/>
    </location>
</feature>
<feature type="splice variant" id="VSP_017761" description="In isoform 5." evidence="6">
    <location>
        <begin position="398"/>
        <end position="446"/>
    </location>
</feature>
<feature type="splice variant" id="VSP_017762" description="In isoform 6." evidence="7">
    <location>
        <begin position="439"/>
        <end position="587"/>
    </location>
</feature>
<feature type="splice variant" id="VSP_017763" description="In isoform 2 and isoform 5." evidence="5 6">
    <original>K</original>
    <variation>KHFVLQ</variation>
    <location>
        <position position="498"/>
    </location>
</feature>
<feature type="sequence conflict" description="In Ref. 2; AAQ88551." evidence="8" ref="2">
    <original>L</original>
    <variation>M</variation>
    <location>
        <position position="14"/>
    </location>
</feature>
<feature type="sequence conflict" description="In Ref. 1; ABB90560." evidence="8" ref="1">
    <original>S</original>
    <variation>T</variation>
    <location>
        <position position="330"/>
    </location>
</feature>
<feature type="sequence conflict" description="In Ref. 3; BAB15000." evidence="8" ref="3">
    <original>K</original>
    <variation>E</variation>
    <location>
        <position position="341"/>
    </location>
</feature>
<evidence type="ECO:0000250" key="1"/>
<evidence type="ECO:0000255" key="2"/>
<evidence type="ECO:0000256" key="3">
    <source>
        <dbReference type="SAM" id="MobiDB-lite"/>
    </source>
</evidence>
<evidence type="ECO:0000269" key="4">
    <source>
    </source>
</evidence>
<evidence type="ECO:0000303" key="5">
    <source>
    </source>
</evidence>
<evidence type="ECO:0000303" key="6">
    <source>
    </source>
</evidence>
<evidence type="ECO:0000303" key="7">
    <source>
    </source>
</evidence>
<evidence type="ECO:0000305" key="8"/>
<dbReference type="EMBL" id="DQ278868">
    <property type="protein sequence ID" value="ABB90560.1"/>
    <property type="molecule type" value="mRNA"/>
</dbReference>
<dbReference type="EMBL" id="AY358184">
    <property type="protein sequence ID" value="AAQ88551.1"/>
    <property type="molecule type" value="mRNA"/>
</dbReference>
<dbReference type="EMBL" id="AK024780">
    <property type="protein sequence ID" value="BAB15000.1"/>
    <property type="molecule type" value="mRNA"/>
</dbReference>
<dbReference type="EMBL" id="AK055891">
    <property type="protein sequence ID" value="BAB71036.1"/>
    <property type="molecule type" value="mRNA"/>
</dbReference>
<dbReference type="EMBL" id="AK092775">
    <property type="protein sequence ID" value="BAC03973.1"/>
    <property type="molecule type" value="mRNA"/>
</dbReference>
<dbReference type="EMBL" id="AC002350">
    <property type="status" value="NOT_ANNOTATED_CDS"/>
    <property type="molecule type" value="Genomic_DNA"/>
</dbReference>
<dbReference type="EMBL" id="AC144522">
    <property type="status" value="NOT_ANNOTATED_CDS"/>
    <property type="molecule type" value="Genomic_DNA"/>
</dbReference>
<dbReference type="EMBL" id="BC040113">
    <property type="protein sequence ID" value="AAH40113.1"/>
    <property type="molecule type" value="mRNA"/>
</dbReference>
<dbReference type="EMBL" id="BC044885">
    <property type="status" value="NOT_ANNOTATED_CDS"/>
    <property type="molecule type" value="mRNA"/>
</dbReference>
<dbReference type="EMBL" id="BC062611">
    <property type="protein sequence ID" value="AAH62611.1"/>
    <property type="molecule type" value="mRNA"/>
</dbReference>
<dbReference type="CCDS" id="CCDS41833.1">
    <molecule id="Q2MV58-3"/>
</dbReference>
<dbReference type="CCDS" id="CCDS41834.1">
    <molecule id="Q2MV58-2"/>
</dbReference>
<dbReference type="CCDS" id="CCDS41835.1">
    <molecule id="Q2MV58-1"/>
</dbReference>
<dbReference type="RefSeq" id="NP_001076006.1">
    <molecule id="Q2MV58-1"/>
    <property type="nucleotide sequence ID" value="NM_001082537.3"/>
</dbReference>
<dbReference type="RefSeq" id="NP_001076007.1">
    <molecule id="Q2MV58-2"/>
    <property type="nucleotide sequence ID" value="NM_001082538.3"/>
</dbReference>
<dbReference type="RefSeq" id="NP_001167446.1">
    <molecule id="Q2MV58-4"/>
    <property type="nucleotide sequence ID" value="NM_001173975.3"/>
</dbReference>
<dbReference type="RefSeq" id="NP_001167447.1">
    <property type="nucleotide sequence ID" value="NM_001173976.1"/>
</dbReference>
<dbReference type="RefSeq" id="NP_078825.2">
    <molecule id="Q2MV58-3"/>
    <property type="nucleotide sequence ID" value="NM_024549.5"/>
</dbReference>
<dbReference type="BioGRID" id="122738">
    <property type="interactions" value="153"/>
</dbReference>
<dbReference type="ComplexPortal" id="CPX-2531">
    <property type="entry name" value="MKS transition zone complex"/>
</dbReference>
<dbReference type="FunCoup" id="Q2MV58">
    <property type="interactions" value="806"/>
</dbReference>
<dbReference type="IntAct" id="Q2MV58">
    <property type="interactions" value="146"/>
</dbReference>
<dbReference type="STRING" id="9606.ENSP00000380779"/>
<dbReference type="GlyCosmos" id="Q2MV58">
    <property type="glycosylation" value="3 sites, No reported glycans"/>
</dbReference>
<dbReference type="GlyGen" id="Q2MV58">
    <property type="glycosylation" value="7 sites, 3 N-linked glycans (3 sites), 1 O-linked glycan (1 site)"/>
</dbReference>
<dbReference type="iPTMnet" id="Q2MV58"/>
<dbReference type="PhosphoSitePlus" id="Q2MV58"/>
<dbReference type="BioMuta" id="TCTN1"/>
<dbReference type="DMDM" id="91208022"/>
<dbReference type="jPOST" id="Q2MV58"/>
<dbReference type="MassIVE" id="Q2MV58"/>
<dbReference type="PaxDb" id="9606-ENSP00000380779"/>
<dbReference type="PeptideAtlas" id="Q2MV58"/>
<dbReference type="ProteomicsDB" id="61399">
    <molecule id="Q2MV58-1"/>
</dbReference>
<dbReference type="ProteomicsDB" id="61400">
    <molecule id="Q2MV58-2"/>
</dbReference>
<dbReference type="ProteomicsDB" id="61401">
    <molecule id="Q2MV58-3"/>
</dbReference>
<dbReference type="ProteomicsDB" id="61402">
    <molecule id="Q2MV58-4"/>
</dbReference>
<dbReference type="ProteomicsDB" id="61403">
    <molecule id="Q2MV58-5"/>
</dbReference>
<dbReference type="ProteomicsDB" id="61404">
    <molecule id="Q2MV58-6"/>
</dbReference>
<dbReference type="TopDownProteomics" id="Q2MV58-2">
    <molecule id="Q2MV58-2"/>
</dbReference>
<dbReference type="Antibodypedia" id="45260">
    <property type="antibodies" value="87 antibodies from 26 providers"/>
</dbReference>
<dbReference type="DNASU" id="79600"/>
<dbReference type="Ensembl" id="ENST00000397655.7">
    <molecule id="Q2MV58-3"/>
    <property type="protein sequence ID" value="ENSP00000380775.3"/>
    <property type="gene ID" value="ENSG00000204852.17"/>
</dbReference>
<dbReference type="Ensembl" id="ENST00000397659.9">
    <molecule id="Q2MV58-2"/>
    <property type="protein sequence ID" value="ENSP00000380779.4"/>
    <property type="gene ID" value="ENSG00000204852.17"/>
</dbReference>
<dbReference type="Ensembl" id="ENST00000551590.5">
    <molecule id="Q2MV58-1"/>
    <property type="protein sequence ID" value="ENSP00000448735.1"/>
    <property type="gene ID" value="ENSG00000204852.17"/>
</dbReference>
<dbReference type="GeneID" id="79600"/>
<dbReference type="KEGG" id="hsa:79600"/>
<dbReference type="MANE-Select" id="ENST00000397659.9">
    <molecule id="Q2MV58-2"/>
    <property type="protein sequence ID" value="ENSP00000380779.4"/>
    <property type="RefSeq nucleotide sequence ID" value="NM_001082538.3"/>
    <property type="RefSeq protein sequence ID" value="NP_001076007.1"/>
</dbReference>
<dbReference type="UCSC" id="uc001trn.6">
    <molecule id="Q2MV58-1"/>
    <property type="organism name" value="human"/>
</dbReference>
<dbReference type="AGR" id="HGNC:26113"/>
<dbReference type="CTD" id="79600"/>
<dbReference type="DisGeNET" id="79600"/>
<dbReference type="GeneCards" id="TCTN1"/>
<dbReference type="GeneReviews" id="TCTN1"/>
<dbReference type="HGNC" id="HGNC:26113">
    <property type="gene designation" value="TCTN1"/>
</dbReference>
<dbReference type="HPA" id="ENSG00000204852">
    <property type="expression patterns" value="Low tissue specificity"/>
</dbReference>
<dbReference type="MalaCards" id="TCTN1"/>
<dbReference type="MIM" id="609863">
    <property type="type" value="gene"/>
</dbReference>
<dbReference type="MIM" id="614173">
    <property type="type" value="phenotype"/>
</dbReference>
<dbReference type="neXtProt" id="NX_Q2MV58"/>
<dbReference type="OpenTargets" id="ENSG00000204852"/>
<dbReference type="Orphanet" id="475">
    <property type="disease" value="Joubert syndrome"/>
</dbReference>
<dbReference type="Orphanet" id="564">
    <property type="disease" value="Meckel syndrome"/>
</dbReference>
<dbReference type="PharmGKB" id="PA162405437"/>
<dbReference type="VEuPathDB" id="HostDB:ENSG00000204852"/>
<dbReference type="eggNOG" id="ENOG502QUK6">
    <property type="taxonomic scope" value="Eukaryota"/>
</dbReference>
<dbReference type="GeneTree" id="ENSGT00570000079101"/>
<dbReference type="HOGENOM" id="CLU_016974_0_1_1"/>
<dbReference type="InParanoid" id="Q2MV58"/>
<dbReference type="OMA" id="AGDVKIC"/>
<dbReference type="OrthoDB" id="2104337at2759"/>
<dbReference type="PAN-GO" id="Q2MV58">
    <property type="GO annotations" value="3 GO annotations based on evolutionary models"/>
</dbReference>
<dbReference type="PhylomeDB" id="Q2MV58"/>
<dbReference type="TreeFam" id="TF329169"/>
<dbReference type="PathwayCommons" id="Q2MV58"/>
<dbReference type="Reactome" id="R-HSA-5620912">
    <property type="pathway name" value="Anchoring of the basal body to the plasma membrane"/>
</dbReference>
<dbReference type="SignaLink" id="Q2MV58"/>
<dbReference type="BioGRID-ORCS" id="79600">
    <property type="hits" value="15 hits in 1147 CRISPR screens"/>
</dbReference>
<dbReference type="ChiTaRS" id="TCTN1">
    <property type="organism name" value="human"/>
</dbReference>
<dbReference type="GenomeRNAi" id="79600"/>
<dbReference type="Pharos" id="Q2MV58">
    <property type="development level" value="Tbio"/>
</dbReference>
<dbReference type="PRO" id="PR:Q2MV58"/>
<dbReference type="Proteomes" id="UP000005640">
    <property type="component" value="Chromosome 12"/>
</dbReference>
<dbReference type="RNAct" id="Q2MV58">
    <property type="molecule type" value="protein"/>
</dbReference>
<dbReference type="Bgee" id="ENSG00000204852">
    <property type="expression patterns" value="Expressed in right uterine tube and 151 other cell types or tissues"/>
</dbReference>
<dbReference type="ExpressionAtlas" id="Q2MV58">
    <property type="expression patterns" value="baseline and differential"/>
</dbReference>
<dbReference type="GO" id="GO:0005856">
    <property type="term" value="C:cytoskeleton"/>
    <property type="evidence" value="ECO:0007669"/>
    <property type="project" value="UniProtKB-KW"/>
</dbReference>
<dbReference type="GO" id="GO:0005829">
    <property type="term" value="C:cytosol"/>
    <property type="evidence" value="ECO:0000304"/>
    <property type="project" value="Reactome"/>
</dbReference>
<dbReference type="GO" id="GO:0005615">
    <property type="term" value="C:extracellular space"/>
    <property type="evidence" value="ECO:0007669"/>
    <property type="project" value="Ensembl"/>
</dbReference>
<dbReference type="GO" id="GO:0016020">
    <property type="term" value="C:membrane"/>
    <property type="evidence" value="ECO:0007669"/>
    <property type="project" value="Ensembl"/>
</dbReference>
<dbReference type="GO" id="GO:0036038">
    <property type="term" value="C:MKS complex"/>
    <property type="evidence" value="ECO:0000250"/>
    <property type="project" value="UniProtKB"/>
</dbReference>
<dbReference type="GO" id="GO:0021956">
    <property type="term" value="P:central nervous system interneuron axonogenesis"/>
    <property type="evidence" value="ECO:0007669"/>
    <property type="project" value="Ensembl"/>
</dbReference>
<dbReference type="GO" id="GO:0060271">
    <property type="term" value="P:cilium assembly"/>
    <property type="evidence" value="ECO:0000250"/>
    <property type="project" value="UniProtKB"/>
</dbReference>
<dbReference type="GO" id="GO:0021904">
    <property type="term" value="P:dorsal/ventral neural tube patterning"/>
    <property type="evidence" value="ECO:0007669"/>
    <property type="project" value="Ensembl"/>
</dbReference>
<dbReference type="GO" id="GO:0001701">
    <property type="term" value="P:in utero embryonic development"/>
    <property type="evidence" value="ECO:0007669"/>
    <property type="project" value="Ensembl"/>
</dbReference>
<dbReference type="GO" id="GO:0001841">
    <property type="term" value="P:neural tube formation"/>
    <property type="evidence" value="ECO:0007669"/>
    <property type="project" value="Ensembl"/>
</dbReference>
<dbReference type="GO" id="GO:1904491">
    <property type="term" value="P:protein localization to ciliary transition zone"/>
    <property type="evidence" value="ECO:0000318"/>
    <property type="project" value="GO_Central"/>
</dbReference>
<dbReference type="GO" id="GO:0008589">
    <property type="term" value="P:regulation of smoothened signaling pathway"/>
    <property type="evidence" value="ECO:0007669"/>
    <property type="project" value="Ensembl"/>
</dbReference>
<dbReference type="GO" id="GO:0021523">
    <property type="term" value="P:somatic motor neuron differentiation"/>
    <property type="evidence" value="ECO:0007669"/>
    <property type="project" value="Ensembl"/>
</dbReference>
<dbReference type="GO" id="GO:0021537">
    <property type="term" value="P:telencephalon development"/>
    <property type="evidence" value="ECO:0007669"/>
    <property type="project" value="Ensembl"/>
</dbReference>
<dbReference type="InterPro" id="IPR040354">
    <property type="entry name" value="Tectonic"/>
</dbReference>
<dbReference type="InterPro" id="IPR011677">
    <property type="entry name" value="Tectonic_dom"/>
</dbReference>
<dbReference type="PANTHER" id="PTHR14611">
    <property type="entry name" value="TECTONIC FAMILY MEMBER"/>
    <property type="match status" value="1"/>
</dbReference>
<dbReference type="PANTHER" id="PTHR14611:SF1">
    <property type="entry name" value="TECTONIC-1"/>
    <property type="match status" value="1"/>
</dbReference>
<dbReference type="Pfam" id="PF07773">
    <property type="entry name" value="TCTN_DUF1619"/>
    <property type="match status" value="1"/>
</dbReference>